<evidence type="ECO:0000255" key="1">
    <source>
        <dbReference type="HAMAP-Rule" id="MF_00368"/>
    </source>
</evidence>
<evidence type="ECO:0000305" key="2"/>
<feature type="chain" id="PRO_1000007081" description="Large ribosomal subunit protein bL12">
    <location>
        <begin position="1"/>
        <end position="121"/>
    </location>
</feature>
<sequence>MSITKDQILEAFAAMSVMEVVELIEAMEEKFGVSAAAAVVSGGAEAAVVEEQTEFNVVLTAHGDNKVAVIKAIRGATGLGLKEAKAMSEAAPVAVKEGVSKEEAEALKKELTEAGASVEIK</sequence>
<organism>
    <name type="scientific">Shewanella baltica (strain OS185)</name>
    <dbReference type="NCBI Taxonomy" id="402882"/>
    <lineage>
        <taxon>Bacteria</taxon>
        <taxon>Pseudomonadati</taxon>
        <taxon>Pseudomonadota</taxon>
        <taxon>Gammaproteobacteria</taxon>
        <taxon>Alteromonadales</taxon>
        <taxon>Shewanellaceae</taxon>
        <taxon>Shewanella</taxon>
    </lineage>
</organism>
<reference key="1">
    <citation type="submission" date="2007-07" db="EMBL/GenBank/DDBJ databases">
        <title>Complete sequence of chromosome of Shewanella baltica OS185.</title>
        <authorList>
            <consortium name="US DOE Joint Genome Institute"/>
            <person name="Copeland A."/>
            <person name="Lucas S."/>
            <person name="Lapidus A."/>
            <person name="Barry K."/>
            <person name="Glavina del Rio T."/>
            <person name="Dalin E."/>
            <person name="Tice H."/>
            <person name="Pitluck S."/>
            <person name="Sims D."/>
            <person name="Brettin T."/>
            <person name="Bruce D."/>
            <person name="Detter J.C."/>
            <person name="Han C."/>
            <person name="Schmutz J."/>
            <person name="Larimer F."/>
            <person name="Land M."/>
            <person name="Hauser L."/>
            <person name="Kyrpides N."/>
            <person name="Mikhailova N."/>
            <person name="Brettar I."/>
            <person name="Rodrigues J."/>
            <person name="Konstantinidis K."/>
            <person name="Tiedje J."/>
            <person name="Richardson P."/>
        </authorList>
    </citation>
    <scope>NUCLEOTIDE SEQUENCE [LARGE SCALE GENOMIC DNA]</scope>
    <source>
        <strain>OS185</strain>
    </source>
</reference>
<proteinExistence type="inferred from homology"/>
<keyword id="KW-0687">Ribonucleoprotein</keyword>
<keyword id="KW-0689">Ribosomal protein</keyword>
<dbReference type="EMBL" id="CP000753">
    <property type="protein sequence ID" value="ABS06359.1"/>
    <property type="molecule type" value="Genomic_DNA"/>
</dbReference>
<dbReference type="RefSeq" id="WP_006083608.1">
    <property type="nucleotide sequence ID" value="NC_009665.1"/>
</dbReference>
<dbReference type="SMR" id="A6WHS0"/>
<dbReference type="GeneID" id="11770552"/>
<dbReference type="KEGG" id="sbm:Shew185_0188"/>
<dbReference type="HOGENOM" id="CLU_086499_3_2_6"/>
<dbReference type="GO" id="GO:0022625">
    <property type="term" value="C:cytosolic large ribosomal subunit"/>
    <property type="evidence" value="ECO:0007669"/>
    <property type="project" value="TreeGrafter"/>
</dbReference>
<dbReference type="GO" id="GO:0003729">
    <property type="term" value="F:mRNA binding"/>
    <property type="evidence" value="ECO:0007669"/>
    <property type="project" value="TreeGrafter"/>
</dbReference>
<dbReference type="GO" id="GO:0003735">
    <property type="term" value="F:structural constituent of ribosome"/>
    <property type="evidence" value="ECO:0007669"/>
    <property type="project" value="InterPro"/>
</dbReference>
<dbReference type="GO" id="GO:0006412">
    <property type="term" value="P:translation"/>
    <property type="evidence" value="ECO:0007669"/>
    <property type="project" value="UniProtKB-UniRule"/>
</dbReference>
<dbReference type="CDD" id="cd00387">
    <property type="entry name" value="Ribosomal_L7_L12"/>
    <property type="match status" value="1"/>
</dbReference>
<dbReference type="FunFam" id="1.20.5.710:FF:000001">
    <property type="entry name" value="50S ribosomal protein L7/L12"/>
    <property type="match status" value="1"/>
</dbReference>
<dbReference type="FunFam" id="3.30.1390.10:FF:000001">
    <property type="entry name" value="50S ribosomal protein L7/L12"/>
    <property type="match status" value="1"/>
</dbReference>
<dbReference type="Gene3D" id="3.30.1390.10">
    <property type="match status" value="1"/>
</dbReference>
<dbReference type="Gene3D" id="1.20.5.710">
    <property type="entry name" value="Single helix bin"/>
    <property type="match status" value="1"/>
</dbReference>
<dbReference type="HAMAP" id="MF_00368">
    <property type="entry name" value="Ribosomal_bL12"/>
    <property type="match status" value="1"/>
</dbReference>
<dbReference type="InterPro" id="IPR000206">
    <property type="entry name" value="Ribosomal_bL12"/>
</dbReference>
<dbReference type="InterPro" id="IPR013823">
    <property type="entry name" value="Ribosomal_bL12_C"/>
</dbReference>
<dbReference type="InterPro" id="IPR014719">
    <property type="entry name" value="Ribosomal_bL12_C/ClpS-like"/>
</dbReference>
<dbReference type="InterPro" id="IPR008932">
    <property type="entry name" value="Ribosomal_bL12_oligo"/>
</dbReference>
<dbReference type="InterPro" id="IPR036235">
    <property type="entry name" value="Ribosomal_bL12_oligo_N_sf"/>
</dbReference>
<dbReference type="NCBIfam" id="TIGR00855">
    <property type="entry name" value="L12"/>
    <property type="match status" value="1"/>
</dbReference>
<dbReference type="PANTHER" id="PTHR45987">
    <property type="entry name" value="39S RIBOSOMAL PROTEIN L12"/>
    <property type="match status" value="1"/>
</dbReference>
<dbReference type="PANTHER" id="PTHR45987:SF4">
    <property type="entry name" value="LARGE RIBOSOMAL SUBUNIT PROTEIN BL12M"/>
    <property type="match status" value="1"/>
</dbReference>
<dbReference type="Pfam" id="PF00542">
    <property type="entry name" value="Ribosomal_L12"/>
    <property type="match status" value="1"/>
</dbReference>
<dbReference type="Pfam" id="PF16320">
    <property type="entry name" value="Ribosomal_L12_N"/>
    <property type="match status" value="1"/>
</dbReference>
<dbReference type="SUPFAM" id="SSF54736">
    <property type="entry name" value="ClpS-like"/>
    <property type="match status" value="1"/>
</dbReference>
<dbReference type="SUPFAM" id="SSF48300">
    <property type="entry name" value="Ribosomal protein L7/12, oligomerisation (N-terminal) domain"/>
    <property type="match status" value="1"/>
</dbReference>
<protein>
    <recommendedName>
        <fullName evidence="1">Large ribosomal subunit protein bL12</fullName>
    </recommendedName>
    <alternativeName>
        <fullName evidence="2">50S ribosomal protein L7/L12</fullName>
    </alternativeName>
</protein>
<gene>
    <name evidence="1" type="primary">rplL</name>
    <name type="ordered locus">Shew185_0188</name>
</gene>
<comment type="function">
    <text evidence="1">Forms part of the ribosomal stalk which helps the ribosome interact with GTP-bound translation factors. Is thus essential for accurate translation.</text>
</comment>
<comment type="subunit">
    <text evidence="1">Homodimer. Part of the ribosomal stalk of the 50S ribosomal subunit. Forms a multimeric L10(L12)X complex, where L10 forms an elongated spine to which 2 to 4 L12 dimers bind in a sequential fashion. Binds GTP-bound translation factors.</text>
</comment>
<comment type="similarity">
    <text evidence="1">Belongs to the bacterial ribosomal protein bL12 family.</text>
</comment>
<name>RL7_SHEB8</name>
<accession>A6WHS0</accession>